<protein>
    <recommendedName>
        <fullName evidence="1">tRNA(Ile)-lysidine synthase</fullName>
        <ecNumber evidence="1">6.3.4.19</ecNumber>
    </recommendedName>
    <alternativeName>
        <fullName evidence="1">tRNA(Ile)-2-lysyl-cytidine synthase</fullName>
    </alternativeName>
    <alternativeName>
        <fullName evidence="1">tRNA(Ile)-lysidine synthetase</fullName>
    </alternativeName>
</protein>
<proteinExistence type="inferred from homology"/>
<accession>Q81J84</accession>
<feature type="chain" id="PRO_0000181643" description="tRNA(Ile)-lysidine synthase">
    <location>
        <begin position="1"/>
        <end position="476"/>
    </location>
</feature>
<feature type="binding site" evidence="1">
    <location>
        <begin position="30"/>
        <end position="35"/>
    </location>
    <ligand>
        <name>ATP</name>
        <dbReference type="ChEBI" id="CHEBI:30616"/>
    </ligand>
</feature>
<keyword id="KW-0067">ATP-binding</keyword>
<keyword id="KW-0963">Cytoplasm</keyword>
<keyword id="KW-0436">Ligase</keyword>
<keyword id="KW-0547">Nucleotide-binding</keyword>
<keyword id="KW-1185">Reference proteome</keyword>
<keyword id="KW-0819">tRNA processing</keyword>
<gene>
    <name evidence="1" type="primary">tilS</name>
    <name type="ordered locus">BC_0070</name>
</gene>
<sequence length="476" mass="55024">MKDTFVEKVDDFVKQHDVLKNDSTIVVGVSGGPDSLALLYYLLEKRAEKQLEIVVAHVDHMFRGDESYEDLQFVQGLCEELGIICETIRINVSQYQQQYGMNAQVAARECRYAFLERIMKKYDARYVALGHHGDDQVETILMRLVRGSTPKGYAGIAVKRPFHNGYLIRPLLGVTKEEIVDYCNKLNLMPRIDPSNKKEVYTRNRLRKYVLPHLKEENPQMHEKFQKFSVQMQEDEAYLQELAFEKMNKVITKKSDKQISLSIPAFESMSMPLQRRGIQLILNYLYEYKIPSSLSSIHIDKLIEFFKRTQPSGSLDFPGDLKIVRSYEECSFRFKQEIVSPFSQDLLVPGTITLLNGDKFVTEVSEDIPSNMNETVFVAKYNDISYPLRIRSRENGDRMSIQGMNGTKKIKAIFIEAKVPKEKREEWPVVCDASGTIIWVPLLKRSAFAISKEMAKKDKYMIIHYKSKESSGRIMK</sequence>
<dbReference type="EC" id="6.3.4.19" evidence="1"/>
<dbReference type="EMBL" id="AE016877">
    <property type="protein sequence ID" value="AAP07166.1"/>
    <property type="molecule type" value="Genomic_DNA"/>
</dbReference>
<dbReference type="RefSeq" id="NP_829965.1">
    <property type="nucleotide sequence ID" value="NC_004722.1"/>
</dbReference>
<dbReference type="RefSeq" id="WP_000655465.1">
    <property type="nucleotide sequence ID" value="NZ_CP138336.1"/>
</dbReference>
<dbReference type="SMR" id="Q81J84"/>
<dbReference type="STRING" id="226900.BC_0070"/>
<dbReference type="KEGG" id="bce:BC0070"/>
<dbReference type="PATRIC" id="fig|226900.8.peg.85"/>
<dbReference type="HOGENOM" id="CLU_018869_0_1_9"/>
<dbReference type="OrthoDB" id="9807403at2"/>
<dbReference type="Proteomes" id="UP000001417">
    <property type="component" value="Chromosome"/>
</dbReference>
<dbReference type="GO" id="GO:0005737">
    <property type="term" value="C:cytoplasm"/>
    <property type="evidence" value="ECO:0007669"/>
    <property type="project" value="UniProtKB-SubCell"/>
</dbReference>
<dbReference type="GO" id="GO:0005524">
    <property type="term" value="F:ATP binding"/>
    <property type="evidence" value="ECO:0007669"/>
    <property type="project" value="UniProtKB-UniRule"/>
</dbReference>
<dbReference type="GO" id="GO:0032267">
    <property type="term" value="F:tRNA(Ile)-lysidine synthase activity"/>
    <property type="evidence" value="ECO:0007669"/>
    <property type="project" value="UniProtKB-EC"/>
</dbReference>
<dbReference type="GO" id="GO:0006400">
    <property type="term" value="P:tRNA modification"/>
    <property type="evidence" value="ECO:0007669"/>
    <property type="project" value="UniProtKB-UniRule"/>
</dbReference>
<dbReference type="CDD" id="cd01992">
    <property type="entry name" value="TilS_N"/>
    <property type="match status" value="1"/>
</dbReference>
<dbReference type="Gene3D" id="3.30.465.60">
    <property type="match status" value="1"/>
</dbReference>
<dbReference type="Gene3D" id="3.40.50.620">
    <property type="entry name" value="HUPs"/>
    <property type="match status" value="1"/>
</dbReference>
<dbReference type="HAMAP" id="MF_01161">
    <property type="entry name" value="tRNA_Ile_lys_synt"/>
    <property type="match status" value="1"/>
</dbReference>
<dbReference type="InterPro" id="IPR012796">
    <property type="entry name" value="Lysidine-tRNA-synth_C"/>
</dbReference>
<dbReference type="InterPro" id="IPR014729">
    <property type="entry name" value="Rossmann-like_a/b/a_fold"/>
</dbReference>
<dbReference type="InterPro" id="IPR011063">
    <property type="entry name" value="TilS/TtcA_N"/>
</dbReference>
<dbReference type="InterPro" id="IPR012094">
    <property type="entry name" value="tRNA_Ile_lys_synt"/>
</dbReference>
<dbReference type="InterPro" id="IPR012795">
    <property type="entry name" value="tRNA_Ile_lys_synt_N"/>
</dbReference>
<dbReference type="InterPro" id="IPR015262">
    <property type="entry name" value="tRNA_Ile_lys_synt_subst-bd"/>
</dbReference>
<dbReference type="NCBIfam" id="TIGR02433">
    <property type="entry name" value="lysidine_TilS_C"/>
    <property type="match status" value="1"/>
</dbReference>
<dbReference type="NCBIfam" id="TIGR02432">
    <property type="entry name" value="lysidine_TilS_N"/>
    <property type="match status" value="1"/>
</dbReference>
<dbReference type="PANTHER" id="PTHR43033">
    <property type="entry name" value="TRNA(ILE)-LYSIDINE SYNTHASE-RELATED"/>
    <property type="match status" value="1"/>
</dbReference>
<dbReference type="PANTHER" id="PTHR43033:SF1">
    <property type="entry name" value="TRNA(ILE)-LYSIDINE SYNTHASE-RELATED"/>
    <property type="match status" value="1"/>
</dbReference>
<dbReference type="Pfam" id="PF01171">
    <property type="entry name" value="ATP_bind_3"/>
    <property type="match status" value="1"/>
</dbReference>
<dbReference type="Pfam" id="PF09179">
    <property type="entry name" value="TilS"/>
    <property type="match status" value="1"/>
</dbReference>
<dbReference type="Pfam" id="PF11734">
    <property type="entry name" value="TilS_C"/>
    <property type="match status" value="1"/>
</dbReference>
<dbReference type="SMART" id="SM00977">
    <property type="entry name" value="TilS_C"/>
    <property type="match status" value="1"/>
</dbReference>
<dbReference type="SUPFAM" id="SSF52402">
    <property type="entry name" value="Adenine nucleotide alpha hydrolases-like"/>
    <property type="match status" value="1"/>
</dbReference>
<dbReference type="SUPFAM" id="SSF82829">
    <property type="entry name" value="MesJ substrate recognition domain-like"/>
    <property type="match status" value="1"/>
</dbReference>
<dbReference type="SUPFAM" id="SSF56037">
    <property type="entry name" value="PheT/TilS domain"/>
    <property type="match status" value="1"/>
</dbReference>
<reference key="1">
    <citation type="journal article" date="2003" name="Nature">
        <title>Genome sequence of Bacillus cereus and comparative analysis with Bacillus anthracis.</title>
        <authorList>
            <person name="Ivanova N."/>
            <person name="Sorokin A."/>
            <person name="Anderson I."/>
            <person name="Galleron N."/>
            <person name="Candelon B."/>
            <person name="Kapatral V."/>
            <person name="Bhattacharyya A."/>
            <person name="Reznik G."/>
            <person name="Mikhailova N."/>
            <person name="Lapidus A."/>
            <person name="Chu L."/>
            <person name="Mazur M."/>
            <person name="Goltsman E."/>
            <person name="Larsen N."/>
            <person name="D'Souza M."/>
            <person name="Walunas T."/>
            <person name="Grechkin Y."/>
            <person name="Pusch G."/>
            <person name="Haselkorn R."/>
            <person name="Fonstein M."/>
            <person name="Ehrlich S.D."/>
            <person name="Overbeek R."/>
            <person name="Kyrpides N.C."/>
        </authorList>
    </citation>
    <scope>NUCLEOTIDE SEQUENCE [LARGE SCALE GENOMIC DNA]</scope>
    <source>
        <strain>ATCC 14579 / DSM 31 / CCUG 7414 / JCM 2152 / NBRC 15305 / NCIMB 9373 / NCTC 2599 / NRRL B-3711</strain>
    </source>
</reference>
<evidence type="ECO:0000255" key="1">
    <source>
        <dbReference type="HAMAP-Rule" id="MF_01161"/>
    </source>
</evidence>
<comment type="function">
    <text evidence="1">Ligates lysine onto the cytidine present at position 34 of the AUA codon-specific tRNA(Ile) that contains the anticodon CAU, in an ATP-dependent manner. Cytidine is converted to lysidine, thus changing the amino acid specificity of the tRNA from methionine to isoleucine.</text>
</comment>
<comment type="catalytic activity">
    <reaction evidence="1">
        <text>cytidine(34) in tRNA(Ile2) + L-lysine + ATP = lysidine(34) in tRNA(Ile2) + AMP + diphosphate + H(+)</text>
        <dbReference type="Rhea" id="RHEA:43744"/>
        <dbReference type="Rhea" id="RHEA-COMP:10625"/>
        <dbReference type="Rhea" id="RHEA-COMP:10670"/>
        <dbReference type="ChEBI" id="CHEBI:15378"/>
        <dbReference type="ChEBI" id="CHEBI:30616"/>
        <dbReference type="ChEBI" id="CHEBI:32551"/>
        <dbReference type="ChEBI" id="CHEBI:33019"/>
        <dbReference type="ChEBI" id="CHEBI:82748"/>
        <dbReference type="ChEBI" id="CHEBI:83665"/>
        <dbReference type="ChEBI" id="CHEBI:456215"/>
        <dbReference type="EC" id="6.3.4.19"/>
    </reaction>
</comment>
<comment type="subcellular location">
    <subcellularLocation>
        <location evidence="1">Cytoplasm</location>
    </subcellularLocation>
</comment>
<comment type="domain">
    <text>The N-terminal region contains the highly conserved SGGXDS motif, predicted to be a P-loop motif involved in ATP binding.</text>
</comment>
<comment type="similarity">
    <text evidence="1">Belongs to the tRNA(Ile)-lysidine synthase family.</text>
</comment>
<organism>
    <name type="scientific">Bacillus cereus (strain ATCC 14579 / DSM 31 / CCUG 7414 / JCM 2152 / NBRC 15305 / NCIMB 9373 / NCTC 2599 / NRRL B-3711)</name>
    <dbReference type="NCBI Taxonomy" id="226900"/>
    <lineage>
        <taxon>Bacteria</taxon>
        <taxon>Bacillati</taxon>
        <taxon>Bacillota</taxon>
        <taxon>Bacilli</taxon>
        <taxon>Bacillales</taxon>
        <taxon>Bacillaceae</taxon>
        <taxon>Bacillus</taxon>
        <taxon>Bacillus cereus group</taxon>
    </lineage>
</organism>
<name>TILS_BACCR</name>